<dbReference type="EC" id="2.3.1.225"/>
<dbReference type="EMBL" id="AL391716">
    <property type="protein sequence ID" value="CAC05509.1"/>
    <property type="status" value="ALT_SEQ"/>
    <property type="molecule type" value="Genomic_DNA"/>
</dbReference>
<dbReference type="EMBL" id="CP002688">
    <property type="status" value="NOT_ANNOTATED_CDS"/>
    <property type="molecule type" value="Genomic_DNA"/>
</dbReference>
<dbReference type="EMBL" id="BT022075">
    <property type="protein sequence ID" value="AAY27062.1"/>
    <property type="molecule type" value="mRNA"/>
</dbReference>
<dbReference type="SMR" id="Q500Z2"/>
<dbReference type="FunCoup" id="Q500Z2">
    <property type="interactions" value="1064"/>
</dbReference>
<dbReference type="STRING" id="3702.Q500Z2"/>
<dbReference type="PaxDb" id="3702-AT5G04270.1"/>
<dbReference type="Araport" id="AT5G04270"/>
<dbReference type="TAIR" id="AT5G04270">
    <property type="gene designation" value="PAT15"/>
</dbReference>
<dbReference type="eggNOG" id="KOG1315">
    <property type="taxonomic scope" value="Eukaryota"/>
</dbReference>
<dbReference type="HOGENOM" id="CLU_027721_7_0_1"/>
<dbReference type="InParanoid" id="Q500Z2"/>
<dbReference type="PhylomeDB" id="Q500Z2"/>
<dbReference type="BRENDA" id="2.3.1.225">
    <property type="organism ID" value="399"/>
</dbReference>
<dbReference type="PRO" id="PR:Q500Z2"/>
<dbReference type="Proteomes" id="UP000006548">
    <property type="component" value="Chromosome 5"/>
</dbReference>
<dbReference type="ExpressionAtlas" id="Q500Z2">
    <property type="expression patterns" value="baseline and differential"/>
</dbReference>
<dbReference type="GO" id="GO:0030659">
    <property type="term" value="C:cytoplasmic vesicle membrane"/>
    <property type="evidence" value="ECO:0007669"/>
    <property type="project" value="UniProtKB-SubCell"/>
</dbReference>
<dbReference type="GO" id="GO:0005783">
    <property type="term" value="C:endoplasmic reticulum"/>
    <property type="evidence" value="ECO:0000318"/>
    <property type="project" value="GO_Central"/>
</dbReference>
<dbReference type="GO" id="GO:0005789">
    <property type="term" value="C:endoplasmic reticulum membrane"/>
    <property type="evidence" value="ECO:0007669"/>
    <property type="project" value="UniProtKB-SubCell"/>
</dbReference>
<dbReference type="GO" id="GO:0005794">
    <property type="term" value="C:Golgi apparatus"/>
    <property type="evidence" value="ECO:0000318"/>
    <property type="project" value="GO_Central"/>
</dbReference>
<dbReference type="GO" id="GO:0019706">
    <property type="term" value="F:protein-cysteine S-palmitoyltransferase activity"/>
    <property type="evidence" value="ECO:0000318"/>
    <property type="project" value="GO_Central"/>
</dbReference>
<dbReference type="GO" id="GO:0006612">
    <property type="term" value="P:protein targeting to membrane"/>
    <property type="evidence" value="ECO:0000318"/>
    <property type="project" value="GO_Central"/>
</dbReference>
<dbReference type="InterPro" id="IPR001594">
    <property type="entry name" value="Palmitoyltrfase_DHHC"/>
</dbReference>
<dbReference type="InterPro" id="IPR039859">
    <property type="entry name" value="PFA4/ZDH16/20/ERF2-like"/>
</dbReference>
<dbReference type="PANTHER" id="PTHR12246">
    <property type="entry name" value="PALMITOYLTRANSFERASE ZDHHC16"/>
    <property type="match status" value="1"/>
</dbReference>
<dbReference type="Pfam" id="PF01529">
    <property type="entry name" value="DHHC"/>
    <property type="match status" value="1"/>
</dbReference>
<dbReference type="PROSITE" id="PS50216">
    <property type="entry name" value="DHHC"/>
    <property type="match status" value="1"/>
</dbReference>
<proteinExistence type="evidence at transcript level"/>
<evidence type="ECO:0000250" key="1"/>
<evidence type="ECO:0000255" key="2"/>
<evidence type="ECO:0000255" key="3">
    <source>
        <dbReference type="PROSITE-ProRule" id="PRU00067"/>
    </source>
</evidence>
<evidence type="ECO:0000269" key="4">
    <source ref="4"/>
</evidence>
<evidence type="ECO:0000305" key="5"/>
<reference key="1">
    <citation type="journal article" date="2000" name="Nature">
        <title>Sequence and analysis of chromosome 5 of the plant Arabidopsis thaliana.</title>
        <authorList>
            <person name="Tabata S."/>
            <person name="Kaneko T."/>
            <person name="Nakamura Y."/>
            <person name="Kotani H."/>
            <person name="Kato T."/>
            <person name="Asamizu E."/>
            <person name="Miyajima N."/>
            <person name="Sasamoto S."/>
            <person name="Kimura T."/>
            <person name="Hosouchi T."/>
            <person name="Kawashima K."/>
            <person name="Kohara M."/>
            <person name="Matsumoto M."/>
            <person name="Matsuno A."/>
            <person name="Muraki A."/>
            <person name="Nakayama S."/>
            <person name="Nakazaki N."/>
            <person name="Naruo K."/>
            <person name="Okumura S."/>
            <person name="Shinpo S."/>
            <person name="Takeuchi C."/>
            <person name="Wada T."/>
            <person name="Watanabe A."/>
            <person name="Yamada M."/>
            <person name="Yasuda M."/>
            <person name="Sato S."/>
            <person name="de la Bastide M."/>
            <person name="Huang E."/>
            <person name="Spiegel L."/>
            <person name="Gnoj L."/>
            <person name="O'Shaughnessy A."/>
            <person name="Preston R."/>
            <person name="Habermann K."/>
            <person name="Murray J."/>
            <person name="Johnson D."/>
            <person name="Rohlfing T."/>
            <person name="Nelson J."/>
            <person name="Stoneking T."/>
            <person name="Pepin K."/>
            <person name="Spieth J."/>
            <person name="Sekhon M."/>
            <person name="Armstrong J."/>
            <person name="Becker M."/>
            <person name="Belter E."/>
            <person name="Cordum H."/>
            <person name="Cordes M."/>
            <person name="Courtney L."/>
            <person name="Courtney W."/>
            <person name="Dante M."/>
            <person name="Du H."/>
            <person name="Edwards J."/>
            <person name="Fryman J."/>
            <person name="Haakensen B."/>
            <person name="Lamar E."/>
            <person name="Latreille P."/>
            <person name="Leonard S."/>
            <person name="Meyer R."/>
            <person name="Mulvaney E."/>
            <person name="Ozersky P."/>
            <person name="Riley A."/>
            <person name="Strowmatt C."/>
            <person name="Wagner-McPherson C."/>
            <person name="Wollam A."/>
            <person name="Yoakum M."/>
            <person name="Bell M."/>
            <person name="Dedhia N."/>
            <person name="Parnell L."/>
            <person name="Shah R."/>
            <person name="Rodriguez M."/>
            <person name="Hoon See L."/>
            <person name="Vil D."/>
            <person name="Baker J."/>
            <person name="Kirchoff K."/>
            <person name="Toth K."/>
            <person name="King L."/>
            <person name="Bahret A."/>
            <person name="Miller B."/>
            <person name="Marra M.A."/>
            <person name="Martienssen R."/>
            <person name="McCombie W.R."/>
            <person name="Wilson R.K."/>
            <person name="Murphy G."/>
            <person name="Bancroft I."/>
            <person name="Volckaert G."/>
            <person name="Wambutt R."/>
            <person name="Duesterhoeft A."/>
            <person name="Stiekema W."/>
            <person name="Pohl T."/>
            <person name="Entian K.-D."/>
            <person name="Terryn N."/>
            <person name="Hartley N."/>
            <person name="Bent E."/>
            <person name="Johnson S."/>
            <person name="Langham S.-A."/>
            <person name="McCullagh B."/>
            <person name="Robben J."/>
            <person name="Grymonprez B."/>
            <person name="Zimmermann W."/>
            <person name="Ramsperger U."/>
            <person name="Wedler H."/>
            <person name="Balke K."/>
            <person name="Wedler E."/>
            <person name="Peters S."/>
            <person name="van Staveren M."/>
            <person name="Dirkse W."/>
            <person name="Mooijman P."/>
            <person name="Klein Lankhorst R."/>
            <person name="Weitzenegger T."/>
            <person name="Bothe G."/>
            <person name="Rose M."/>
            <person name="Hauf J."/>
            <person name="Berneiser S."/>
            <person name="Hempel S."/>
            <person name="Feldpausch M."/>
            <person name="Lamberth S."/>
            <person name="Villarroel R."/>
            <person name="Gielen J."/>
            <person name="Ardiles W."/>
            <person name="Bents O."/>
            <person name="Lemcke K."/>
            <person name="Kolesov G."/>
            <person name="Mayer K.F.X."/>
            <person name="Rudd S."/>
            <person name="Schoof H."/>
            <person name="Schueller C."/>
            <person name="Zaccaria P."/>
            <person name="Mewes H.-W."/>
            <person name="Bevan M."/>
            <person name="Fransz P.F."/>
        </authorList>
    </citation>
    <scope>NUCLEOTIDE SEQUENCE [LARGE SCALE GENOMIC DNA]</scope>
    <source>
        <strain>cv. Columbia</strain>
    </source>
</reference>
<reference key="2">
    <citation type="journal article" date="2017" name="Plant J.">
        <title>Araport11: a complete reannotation of the Arabidopsis thaliana reference genome.</title>
        <authorList>
            <person name="Cheng C.Y."/>
            <person name="Krishnakumar V."/>
            <person name="Chan A.P."/>
            <person name="Thibaud-Nissen F."/>
            <person name="Schobel S."/>
            <person name="Town C.D."/>
        </authorList>
    </citation>
    <scope>GENOME REANNOTATION</scope>
    <source>
        <strain>cv. Columbia</strain>
    </source>
</reference>
<reference key="3">
    <citation type="submission" date="2005-05" db="EMBL/GenBank/DDBJ databases">
        <title>Arabidopsis cDNA clones.</title>
        <authorList>
            <person name="Shinn P."/>
            <person name="Chen H."/>
            <person name="Cheuk R.F."/>
            <person name="Kim C.J."/>
            <person name="Ecker J.R."/>
        </authorList>
    </citation>
    <scope>NUCLEOTIDE SEQUENCE [LARGE SCALE MRNA]</scope>
    <source>
        <strain>cv. Columbia</strain>
    </source>
</reference>
<reference key="4">
    <citation type="book" date="2007" name="Proceedings of the 18th international conference on Arabidopsis research">
        <title>S-acylation: dynamic control of plant development and sigalling by lipid modification of proteins.</title>
        <authorList>
            <person name="Hemsley P.A."/>
            <person name="Taylor L."/>
            <person name="Grierson C.S."/>
        </authorList>
    </citation>
    <scope>GENE FAMILY</scope>
    <scope>FUNCTION</scope>
</reference>
<reference key="5">
    <citation type="journal article" date="2012" name="Plant Physiol.">
        <title>Genomics and localization of the Arabidopsis DHHC-cysteine-rich domain S-acyltransferase protein family.</title>
        <authorList>
            <person name="Batistic O."/>
        </authorList>
    </citation>
    <scope>SUBCELLULAR LOCATION</scope>
    <scope>GENE FAMILY</scope>
    <scope>NOMENCLATURE</scope>
</reference>
<keyword id="KW-0012">Acyltransferase</keyword>
<keyword id="KW-0968">Cytoplasmic vesicle</keyword>
<keyword id="KW-0256">Endoplasmic reticulum</keyword>
<keyword id="KW-0449">Lipoprotein</keyword>
<keyword id="KW-0472">Membrane</keyword>
<keyword id="KW-0564">Palmitate</keyword>
<keyword id="KW-1185">Reference proteome</keyword>
<keyword id="KW-0808">Transferase</keyword>
<keyword id="KW-0812">Transmembrane</keyword>
<keyword id="KW-1133">Transmembrane helix</keyword>
<comment type="function">
    <text evidence="1 4">Palmitoyl acyltransferase.</text>
</comment>
<comment type="catalytic activity">
    <reaction>
        <text>L-cysteinyl-[protein] + hexadecanoyl-CoA = S-hexadecanoyl-L-cysteinyl-[protein] + CoA</text>
        <dbReference type="Rhea" id="RHEA:36683"/>
        <dbReference type="Rhea" id="RHEA-COMP:10131"/>
        <dbReference type="Rhea" id="RHEA-COMP:11032"/>
        <dbReference type="ChEBI" id="CHEBI:29950"/>
        <dbReference type="ChEBI" id="CHEBI:57287"/>
        <dbReference type="ChEBI" id="CHEBI:57379"/>
        <dbReference type="ChEBI" id="CHEBI:74151"/>
        <dbReference type="EC" id="2.3.1.225"/>
    </reaction>
</comment>
<comment type="subcellular location">
    <subcellularLocation>
        <location evidence="5">Endoplasmic reticulum membrane</location>
        <topology evidence="5">Multi-pass membrane protein</topology>
    </subcellularLocation>
    <subcellularLocation>
        <location evidence="5">Cytoplasmic vesicle membrane</location>
        <topology evidence="5">Multi-pass membrane protein</topology>
    </subcellularLocation>
</comment>
<comment type="domain">
    <text evidence="1">The DHHC domain is required for palmitoyltransferase activity.</text>
</comment>
<comment type="similarity">
    <text evidence="5">Belongs to the DHHC palmitoyltransferase family.</text>
</comment>
<comment type="sequence caution" evidence="5">
    <conflict type="erroneous gene model prediction">
        <sequence resource="EMBL-CDS" id="CAC05509"/>
    </conflict>
</comment>
<sequence length="254" mass="28643">MGFVYYVTLFVFIDDWVGLQSSAGKLNALLFSLLASLCLFSLSICVLVDPGRVPASYAPDVEDSGWSNSNVTETRKCDKCFAYKPLRTHHCRVCRRCVLKMDHHCLWINNCVGYANYKAFFILVFYATVASIYSTVLLVCCAFKNGDSYAGNVPLKTFIVSCGIFMIGLSITLGTLLCWHIYLITHNMTTIEHYDSKRASWLARKSGQSYRHQFDVGFYKNLTSVLGPNMIKWLCPTFTRNPEDGISFSASRDS</sequence>
<protein>
    <recommendedName>
        <fullName>Probable protein S-acyltransferase 15</fullName>
        <ecNumber>2.3.1.225</ecNumber>
    </recommendedName>
    <alternativeName>
        <fullName>Probable palmitoyltransferase At5g04270</fullName>
    </alternativeName>
    <alternativeName>
        <fullName>Zinc finger DHHC domain-containing protein At5g04270</fullName>
    </alternativeName>
</protein>
<feature type="chain" id="PRO_0000363605" description="Probable protein S-acyltransferase 15">
    <location>
        <begin position="1"/>
        <end position="254"/>
    </location>
</feature>
<feature type="transmembrane region" description="Helical" evidence="2">
    <location>
        <begin position="1"/>
        <end position="21"/>
    </location>
</feature>
<feature type="transmembrane region" description="Helical" evidence="2">
    <location>
        <begin position="28"/>
        <end position="48"/>
    </location>
</feature>
<feature type="transmembrane region" description="Helical" evidence="2">
    <location>
        <begin position="119"/>
        <end position="139"/>
    </location>
</feature>
<feature type="transmembrane region" description="Helical" evidence="2">
    <location>
        <begin position="164"/>
        <end position="184"/>
    </location>
</feature>
<feature type="domain" description="DHHC" evidence="3">
    <location>
        <begin position="75"/>
        <end position="125"/>
    </location>
</feature>
<feature type="active site" description="S-palmitoyl cysteine intermediate" evidence="1">
    <location>
        <position position="105"/>
    </location>
</feature>
<organism>
    <name type="scientific">Arabidopsis thaliana</name>
    <name type="common">Mouse-ear cress</name>
    <dbReference type="NCBI Taxonomy" id="3702"/>
    <lineage>
        <taxon>Eukaryota</taxon>
        <taxon>Viridiplantae</taxon>
        <taxon>Streptophyta</taxon>
        <taxon>Embryophyta</taxon>
        <taxon>Tracheophyta</taxon>
        <taxon>Spermatophyta</taxon>
        <taxon>Magnoliopsida</taxon>
        <taxon>eudicotyledons</taxon>
        <taxon>Gunneridae</taxon>
        <taxon>Pentapetalae</taxon>
        <taxon>rosids</taxon>
        <taxon>malvids</taxon>
        <taxon>Brassicales</taxon>
        <taxon>Brassicaceae</taxon>
        <taxon>Camelineae</taxon>
        <taxon>Arabidopsis</taxon>
    </lineage>
</organism>
<name>ZDH20_ARATH</name>
<gene>
    <name type="primary">PAT15</name>
    <name type="ordered locus">At5g04270</name>
    <name type="ORF">F21E1_190</name>
    <name type="ORF">T19N18.6</name>
</gene>
<accession>Q500Z2</accession>
<accession>Q9FYD4</accession>